<sequence>MVEALLSGIVLGLIPITLAGLFVTAYLQYRRGDQLDL</sequence>
<comment type="function">
    <text evidence="1">Component of the cytochrome b6-f complex, which mediates electron transfer between photosystem II (PSII) and photosystem I (PSI), cyclic electron flow around PSI, and state transitions. PetG is required for either the stability or assembly of the cytochrome b6-f complex.</text>
</comment>
<comment type="subunit">
    <text evidence="1">The 4 large subunits of the cytochrome b6-f complex are cytochrome b6, subunit IV (17 kDa polypeptide, PetD), cytochrome f and the Rieske protein, while the 4 small subunits are PetG, PetL, PetM and PetN. The complex functions as a dimer.</text>
</comment>
<comment type="subcellular location">
    <subcellularLocation>
        <location evidence="1">Plastid</location>
        <location evidence="1">Chloroplast thylakoid membrane</location>
        <topology evidence="1">Single-pass membrane protein</topology>
    </subcellularLocation>
</comment>
<comment type="similarity">
    <text evidence="1">Belongs to the PetG family.</text>
</comment>
<organism>
    <name type="scientific">Angiopteris evecta</name>
    <name type="common">Mule's foot fern</name>
    <name type="synonym">Polypodium evectum</name>
    <dbReference type="NCBI Taxonomy" id="13825"/>
    <lineage>
        <taxon>Eukaryota</taxon>
        <taxon>Viridiplantae</taxon>
        <taxon>Streptophyta</taxon>
        <taxon>Embryophyta</taxon>
        <taxon>Tracheophyta</taxon>
        <taxon>Polypodiopsida</taxon>
        <taxon>Marattiidae</taxon>
        <taxon>Marattiales</taxon>
        <taxon>Marattiaceae</taxon>
        <taxon>Angiopteris</taxon>
    </lineage>
</organism>
<name>PETG_ANGEV</name>
<protein>
    <recommendedName>
        <fullName evidence="1">Cytochrome b6-f complex subunit 5</fullName>
    </recommendedName>
    <alternativeName>
        <fullName evidence="1">Cytochrome b6-f complex subunit PetG</fullName>
    </alternativeName>
    <alternativeName>
        <fullName evidence="1">Cytochrome b6-f complex subunit V</fullName>
    </alternativeName>
</protein>
<accession>A2T352</accession>
<reference key="1">
    <citation type="journal article" date="2007" name="Am. Fern J.">
        <title>The complete plastid genome sequence of Angiopteris evecta (G. Forst.) Hoffm. (Marattiaceae).</title>
        <authorList>
            <person name="Roper J.M."/>
            <person name="Hansen S.K."/>
            <person name="Wolf P.G."/>
            <person name="Karol K.G."/>
            <person name="Mandoli D.F."/>
            <person name="Everett K.D.E."/>
            <person name="Kuehl J."/>
            <person name="Boore J.L."/>
        </authorList>
    </citation>
    <scope>NUCLEOTIDE SEQUENCE [LARGE SCALE GENOMIC DNA]</scope>
</reference>
<feature type="chain" id="PRO_0000355368" description="Cytochrome b6-f complex subunit 5">
    <location>
        <begin position="1"/>
        <end position="37"/>
    </location>
</feature>
<feature type="transmembrane region" description="Helical" evidence="1">
    <location>
        <begin position="5"/>
        <end position="25"/>
    </location>
</feature>
<gene>
    <name evidence="1" type="primary">petG</name>
</gene>
<proteinExistence type="inferred from homology"/>
<geneLocation type="chloroplast"/>
<dbReference type="EMBL" id="DQ821119">
    <property type="protein sequence ID" value="ABG79619.1"/>
    <property type="molecule type" value="Genomic_DNA"/>
</dbReference>
<dbReference type="RefSeq" id="YP_001023720.1">
    <property type="nucleotide sequence ID" value="NC_008829.1"/>
</dbReference>
<dbReference type="SMR" id="A2T352"/>
<dbReference type="GeneID" id="4788192"/>
<dbReference type="GO" id="GO:0009535">
    <property type="term" value="C:chloroplast thylakoid membrane"/>
    <property type="evidence" value="ECO:0007669"/>
    <property type="project" value="UniProtKB-SubCell"/>
</dbReference>
<dbReference type="GO" id="GO:0009512">
    <property type="term" value="C:cytochrome b6f complex"/>
    <property type="evidence" value="ECO:0007669"/>
    <property type="project" value="InterPro"/>
</dbReference>
<dbReference type="GO" id="GO:0045158">
    <property type="term" value="F:electron transporter, transferring electrons within cytochrome b6/f complex of photosystem II activity"/>
    <property type="evidence" value="ECO:0007669"/>
    <property type="project" value="UniProtKB-UniRule"/>
</dbReference>
<dbReference type="GO" id="GO:0017004">
    <property type="term" value="P:cytochrome complex assembly"/>
    <property type="evidence" value="ECO:0007669"/>
    <property type="project" value="UniProtKB-UniRule"/>
</dbReference>
<dbReference type="GO" id="GO:0015979">
    <property type="term" value="P:photosynthesis"/>
    <property type="evidence" value="ECO:0007669"/>
    <property type="project" value="UniProtKB-KW"/>
</dbReference>
<dbReference type="HAMAP" id="MF_00432">
    <property type="entry name" value="Cytb6_f_PetG"/>
    <property type="match status" value="1"/>
</dbReference>
<dbReference type="InterPro" id="IPR003683">
    <property type="entry name" value="Cyt_6/f_cplx_su5"/>
</dbReference>
<dbReference type="InterPro" id="IPR036099">
    <property type="entry name" value="Cyt_6/f_cplx_su5_sf"/>
</dbReference>
<dbReference type="NCBIfam" id="NF001907">
    <property type="entry name" value="PRK00665.1"/>
    <property type="match status" value="1"/>
</dbReference>
<dbReference type="Pfam" id="PF02529">
    <property type="entry name" value="PetG"/>
    <property type="match status" value="1"/>
</dbReference>
<dbReference type="PIRSF" id="PIRSF000034">
    <property type="entry name" value="Cyt_b6-f_V"/>
    <property type="match status" value="1"/>
</dbReference>
<dbReference type="SUPFAM" id="SSF103446">
    <property type="entry name" value="PetG subunit of the cytochrome b6f complex"/>
    <property type="match status" value="1"/>
</dbReference>
<evidence type="ECO:0000255" key="1">
    <source>
        <dbReference type="HAMAP-Rule" id="MF_00432"/>
    </source>
</evidence>
<keyword id="KW-0150">Chloroplast</keyword>
<keyword id="KW-0249">Electron transport</keyword>
<keyword id="KW-0472">Membrane</keyword>
<keyword id="KW-0602">Photosynthesis</keyword>
<keyword id="KW-0934">Plastid</keyword>
<keyword id="KW-0793">Thylakoid</keyword>
<keyword id="KW-0812">Transmembrane</keyword>
<keyword id="KW-1133">Transmembrane helix</keyword>
<keyword id="KW-0813">Transport</keyword>